<accession>A6LL73</accession>
<proteinExistence type="inferred from homology"/>
<feature type="chain" id="PRO_1000064236" description="Glycerol-3-phosphate acyltransferase">
    <location>
        <begin position="1"/>
        <end position="200"/>
    </location>
</feature>
<feature type="transmembrane region" description="Helical" evidence="1">
    <location>
        <begin position="3"/>
        <end position="23"/>
    </location>
</feature>
<feature type="transmembrane region" description="Helical" evidence="1">
    <location>
        <begin position="50"/>
        <end position="70"/>
    </location>
</feature>
<feature type="transmembrane region" description="Helical" evidence="1">
    <location>
        <begin position="75"/>
        <end position="95"/>
    </location>
</feature>
<feature type="transmembrane region" description="Helical" evidence="1">
    <location>
        <begin position="109"/>
        <end position="129"/>
    </location>
</feature>
<feature type="transmembrane region" description="Helical" evidence="1">
    <location>
        <begin position="134"/>
        <end position="154"/>
    </location>
</feature>
<dbReference type="EC" id="2.3.1.275" evidence="1"/>
<dbReference type="EMBL" id="CP000716">
    <property type="protein sequence ID" value="ABR30674.1"/>
    <property type="molecule type" value="Genomic_DNA"/>
</dbReference>
<dbReference type="RefSeq" id="WP_012057035.1">
    <property type="nucleotide sequence ID" value="NC_009616.1"/>
</dbReference>
<dbReference type="SMR" id="A6LL73"/>
<dbReference type="STRING" id="391009.Tmel_0813"/>
<dbReference type="KEGG" id="tme:Tmel_0813"/>
<dbReference type="eggNOG" id="COG0344">
    <property type="taxonomic scope" value="Bacteria"/>
</dbReference>
<dbReference type="HOGENOM" id="CLU_081254_1_0_0"/>
<dbReference type="UniPathway" id="UPA00085"/>
<dbReference type="Proteomes" id="UP000001110">
    <property type="component" value="Chromosome"/>
</dbReference>
<dbReference type="GO" id="GO:0005886">
    <property type="term" value="C:plasma membrane"/>
    <property type="evidence" value="ECO:0007669"/>
    <property type="project" value="UniProtKB-SubCell"/>
</dbReference>
<dbReference type="GO" id="GO:0043772">
    <property type="term" value="F:acyl-phosphate glycerol-3-phosphate acyltransferase activity"/>
    <property type="evidence" value="ECO:0007669"/>
    <property type="project" value="UniProtKB-UniRule"/>
</dbReference>
<dbReference type="GO" id="GO:0008654">
    <property type="term" value="P:phospholipid biosynthetic process"/>
    <property type="evidence" value="ECO:0007669"/>
    <property type="project" value="UniProtKB-UniRule"/>
</dbReference>
<dbReference type="HAMAP" id="MF_01043">
    <property type="entry name" value="PlsY"/>
    <property type="match status" value="1"/>
</dbReference>
<dbReference type="InterPro" id="IPR003811">
    <property type="entry name" value="G3P_acylTferase_PlsY"/>
</dbReference>
<dbReference type="NCBIfam" id="TIGR00023">
    <property type="entry name" value="glycerol-3-phosphate 1-O-acyltransferase PlsY"/>
    <property type="match status" value="1"/>
</dbReference>
<dbReference type="PANTHER" id="PTHR30309:SF0">
    <property type="entry name" value="GLYCEROL-3-PHOSPHATE ACYLTRANSFERASE-RELATED"/>
    <property type="match status" value="1"/>
</dbReference>
<dbReference type="PANTHER" id="PTHR30309">
    <property type="entry name" value="INNER MEMBRANE PROTEIN YGIH"/>
    <property type="match status" value="1"/>
</dbReference>
<dbReference type="Pfam" id="PF02660">
    <property type="entry name" value="G3P_acyltransf"/>
    <property type="match status" value="1"/>
</dbReference>
<dbReference type="SMART" id="SM01207">
    <property type="entry name" value="G3P_acyltransf"/>
    <property type="match status" value="1"/>
</dbReference>
<comment type="function">
    <text evidence="1">Catalyzes the transfer of an acyl group from acyl-phosphate (acyl-PO(4)) to glycerol-3-phosphate (G3P) to form lysophosphatidic acid (LPA). This enzyme utilizes acyl-phosphate as fatty acyl donor, but not acyl-CoA or acyl-ACP.</text>
</comment>
<comment type="catalytic activity">
    <reaction evidence="1">
        <text>an acyl phosphate + sn-glycerol 3-phosphate = a 1-acyl-sn-glycero-3-phosphate + phosphate</text>
        <dbReference type="Rhea" id="RHEA:34075"/>
        <dbReference type="ChEBI" id="CHEBI:43474"/>
        <dbReference type="ChEBI" id="CHEBI:57597"/>
        <dbReference type="ChEBI" id="CHEBI:57970"/>
        <dbReference type="ChEBI" id="CHEBI:59918"/>
        <dbReference type="EC" id="2.3.1.275"/>
    </reaction>
</comment>
<comment type="pathway">
    <text evidence="1">Lipid metabolism; phospholipid metabolism.</text>
</comment>
<comment type="subunit">
    <text evidence="1">Probably interacts with PlsX.</text>
</comment>
<comment type="subcellular location">
    <subcellularLocation>
        <location evidence="1">Cell inner membrane</location>
        <topology evidence="1">Multi-pass membrane protein</topology>
    </subcellularLocation>
</comment>
<comment type="similarity">
    <text evidence="1">Belongs to the PlsY family.</text>
</comment>
<protein>
    <recommendedName>
        <fullName evidence="1">Glycerol-3-phosphate acyltransferase</fullName>
    </recommendedName>
    <alternativeName>
        <fullName evidence="1">Acyl-PO4 G3P acyltransferase</fullName>
    </alternativeName>
    <alternativeName>
        <fullName evidence="1">Acyl-phosphate--glycerol-3-phosphate acyltransferase</fullName>
    </alternativeName>
    <alternativeName>
        <fullName evidence="1">G3P acyltransferase</fullName>
        <shortName evidence="1">GPAT</shortName>
        <ecNumber evidence="1">2.3.1.275</ecNumber>
    </alternativeName>
    <alternativeName>
        <fullName evidence="1">Lysophosphatidic acid synthase</fullName>
        <shortName evidence="1">LPA synthase</shortName>
    </alternativeName>
</protein>
<keyword id="KW-0997">Cell inner membrane</keyword>
<keyword id="KW-1003">Cell membrane</keyword>
<keyword id="KW-0444">Lipid biosynthesis</keyword>
<keyword id="KW-0443">Lipid metabolism</keyword>
<keyword id="KW-0472">Membrane</keyword>
<keyword id="KW-0594">Phospholipid biosynthesis</keyword>
<keyword id="KW-1208">Phospholipid metabolism</keyword>
<keyword id="KW-0808">Transferase</keyword>
<keyword id="KW-0812">Transmembrane</keyword>
<keyword id="KW-1133">Transmembrane helix</keyword>
<evidence type="ECO:0000255" key="1">
    <source>
        <dbReference type="HAMAP-Rule" id="MF_01043"/>
    </source>
</evidence>
<sequence length="200" mass="22235">MEYIYSIFIGYFFGAIPFSFFIAKLKGIDIRKTGSGNVGGTNVLRNAGAFYGALAFFFDIFKAYIAVFLVKGFGIKFMLIAGTMAVLGHCYSIFLKFKGGKGVASTFGVFLAVYPWSGLVFFGVWLFIVAVTKYVSLASMIGLIFASIFVFFAGKDFWVIFLALSLFSILRHKDNIQRLINGNERKTDVIGYFFGKGKKN</sequence>
<reference key="1">
    <citation type="submission" date="2007-05" db="EMBL/GenBank/DDBJ databases">
        <title>Complete sequence of Thermosipho melanesiensis BI429.</title>
        <authorList>
            <consortium name="US DOE Joint Genome Institute"/>
            <person name="Copeland A."/>
            <person name="Lucas S."/>
            <person name="Lapidus A."/>
            <person name="Barry K."/>
            <person name="Glavina del Rio T."/>
            <person name="Dalin E."/>
            <person name="Tice H."/>
            <person name="Pitluck S."/>
            <person name="Chertkov O."/>
            <person name="Brettin T."/>
            <person name="Bruce D."/>
            <person name="Detter J.C."/>
            <person name="Han C."/>
            <person name="Schmutz J."/>
            <person name="Larimer F."/>
            <person name="Land M."/>
            <person name="Hauser L."/>
            <person name="Kyrpides N."/>
            <person name="Mikhailova N."/>
            <person name="Nelson K."/>
            <person name="Gogarten J.P."/>
            <person name="Noll K."/>
            <person name="Richardson P."/>
        </authorList>
    </citation>
    <scope>NUCLEOTIDE SEQUENCE [LARGE SCALE GENOMIC DNA]</scope>
    <source>
        <strain>DSM 12029 / CIP 104789 / BI429</strain>
    </source>
</reference>
<gene>
    <name evidence="1" type="primary">plsY</name>
    <name type="ordered locus">Tmel_0813</name>
</gene>
<organism>
    <name type="scientific">Thermosipho melanesiensis (strain DSM 12029 / CIP 104789 / BI429)</name>
    <dbReference type="NCBI Taxonomy" id="391009"/>
    <lineage>
        <taxon>Bacteria</taxon>
        <taxon>Thermotogati</taxon>
        <taxon>Thermotogota</taxon>
        <taxon>Thermotogae</taxon>
        <taxon>Thermotogales</taxon>
        <taxon>Fervidobacteriaceae</taxon>
        <taxon>Thermosipho</taxon>
    </lineage>
</organism>
<name>PLSY_THEM4</name>